<gene>
    <name type="primary">nuoG</name>
    <name type="ordered locus">PP_4124</name>
</gene>
<sequence length="904" mass="97582">MATIHVDGKALEVNGADNLLQACLSLGLDIPYFCWHPALGSVGACRQCAVKQYTDENDTRGRIVMSCMTPASDGTWISIDDEESKAFRASVVEWLMTNHPHDCPVCEEGGHCHLQDMTVMTGHNERRYRFTKRTHQNQDLGPFIAHEMNRCIACYRCVRYYKDYAGGTDLGVYGAHDNVYFGRVEDGVLESEFSGNLTEVCPTGVFTDKTHSERYNRKWDMQFAPSICHGCSSGCNISPGERYGELRRIENRFNGSVNQYFLCDRGRFGYGYVNRKDRPRQPQLADGTKLGLDAALDKAADLLRGRTIVGIGSPRASLESNYGLRELVGAEYFYSGMEAGELARVRLALNVLNNSPLPVPTLRDIEDHDAVFVLGEDLTQTAARVALAVRQATKGKAEAMAEAMKVQPWLDAAVKNIGQHALYPLFIASLAETKLDDVAEECVHAAPADLARIGFAVAHAIDPSAPAVAGLDDEAQALAQRIADALVAAKRPLVVAGTSLADPALIEAAANIAKALKLREKNGSLSLVVPEANSLGLAMLGGESVDAALDAVISGKADAIVVLENDLYARVPAAKVDAALAAAKVVIVADHSKTATVDRAHLVLPAASFAEGDGTLVSQEGRAQRFFQVFDPQYLDSSIQIHEGWRWMHALRATLLNKPVDWTQLDHVTSACAEAAPQLAGIVNAAPSAAFRIKGMKLAREPLRYSGRTAMRANISVHEPRTPQDKDTAFAFSMEGYSGSAEPRQQVPFAWSPGWNSPQAWNKFQDEVGGHLRAGDPGVRLIESQGDRLNWFNAIPGAFNPARGIWTAVPFFHLFGSEESSSRAAPVQERIPAAYVALAKSEADRLGVNDGALLSLNVAGVALRLPLRINEELGAGLVALPKGLAGIPPAIFGASVEGLQEAAQ</sequence>
<feature type="chain" id="PRO_0000118551" description="NADH-quinone oxidoreductase subunit G">
    <location>
        <begin position="1"/>
        <end position="904"/>
    </location>
</feature>
<feature type="domain" description="2Fe-2S ferredoxin-type" evidence="3">
    <location>
        <begin position="1"/>
        <end position="83"/>
    </location>
</feature>
<feature type="domain" description="4Fe-4S His(Cys)3-ligated-type" evidence="5">
    <location>
        <begin position="83"/>
        <end position="122"/>
    </location>
</feature>
<feature type="domain" description="4Fe-4S Mo/W bis-MGD-type" evidence="4">
    <location>
        <begin position="221"/>
        <end position="277"/>
    </location>
</feature>
<feature type="binding site" evidence="1">
    <location>
        <position position="34"/>
    </location>
    <ligand>
        <name>[2Fe-2S] cluster</name>
        <dbReference type="ChEBI" id="CHEBI:190135"/>
    </ligand>
</feature>
<feature type="binding site" evidence="1">
    <location>
        <position position="45"/>
    </location>
    <ligand>
        <name>[2Fe-2S] cluster</name>
        <dbReference type="ChEBI" id="CHEBI:190135"/>
    </ligand>
</feature>
<feature type="binding site" evidence="1">
    <location>
        <position position="48"/>
    </location>
    <ligand>
        <name>[2Fe-2S] cluster</name>
        <dbReference type="ChEBI" id="CHEBI:190135"/>
    </ligand>
</feature>
<feature type="binding site" evidence="1">
    <location>
        <position position="67"/>
    </location>
    <ligand>
        <name>[2Fe-2S] cluster</name>
        <dbReference type="ChEBI" id="CHEBI:190135"/>
    </ligand>
</feature>
<feature type="binding site" evidence="5">
    <location>
        <position position="99"/>
    </location>
    <ligand>
        <name>[4Fe-4S] cluster</name>
        <dbReference type="ChEBI" id="CHEBI:49883"/>
        <label>1</label>
    </ligand>
</feature>
<feature type="binding site" evidence="5">
    <location>
        <position position="103"/>
    </location>
    <ligand>
        <name>[4Fe-4S] cluster</name>
        <dbReference type="ChEBI" id="CHEBI:49883"/>
        <label>1</label>
    </ligand>
</feature>
<feature type="binding site" evidence="5">
    <location>
        <position position="106"/>
    </location>
    <ligand>
        <name>[4Fe-4S] cluster</name>
        <dbReference type="ChEBI" id="CHEBI:49883"/>
        <label>1</label>
    </ligand>
</feature>
<feature type="binding site" evidence="5">
    <location>
        <position position="112"/>
    </location>
    <ligand>
        <name>[4Fe-4S] cluster</name>
        <dbReference type="ChEBI" id="CHEBI:49883"/>
        <label>1</label>
    </ligand>
</feature>
<feature type="binding site" evidence="1">
    <location>
        <position position="151"/>
    </location>
    <ligand>
        <name>[4Fe-4S] cluster</name>
        <dbReference type="ChEBI" id="CHEBI:49883"/>
        <label>2</label>
    </ligand>
</feature>
<feature type="binding site" evidence="1">
    <location>
        <position position="154"/>
    </location>
    <ligand>
        <name>[4Fe-4S] cluster</name>
        <dbReference type="ChEBI" id="CHEBI:49883"/>
        <label>2</label>
    </ligand>
</feature>
<feature type="binding site" evidence="1">
    <location>
        <position position="157"/>
    </location>
    <ligand>
        <name>[4Fe-4S] cluster</name>
        <dbReference type="ChEBI" id="CHEBI:49883"/>
        <label>2</label>
    </ligand>
</feature>
<feature type="binding site" evidence="1">
    <location>
        <position position="201"/>
    </location>
    <ligand>
        <name>[4Fe-4S] cluster</name>
        <dbReference type="ChEBI" id="CHEBI:49883"/>
        <label>2</label>
    </ligand>
</feature>
<feature type="binding site" evidence="2">
    <location>
        <position position="228"/>
    </location>
    <ligand>
        <name>[4Fe-4S] cluster</name>
        <dbReference type="ChEBI" id="CHEBI:49883"/>
        <label>3</label>
    </ligand>
</feature>
<feature type="binding site" evidence="2">
    <location>
        <position position="231"/>
    </location>
    <ligand>
        <name>[4Fe-4S] cluster</name>
        <dbReference type="ChEBI" id="CHEBI:49883"/>
        <label>3</label>
    </ligand>
</feature>
<feature type="binding site" evidence="2">
    <location>
        <position position="235"/>
    </location>
    <ligand>
        <name>[4Fe-4S] cluster</name>
        <dbReference type="ChEBI" id="CHEBI:49883"/>
        <label>3</label>
    </ligand>
</feature>
<feature type="binding site" evidence="2">
    <location>
        <position position="263"/>
    </location>
    <ligand>
        <name>[4Fe-4S] cluster</name>
        <dbReference type="ChEBI" id="CHEBI:49883"/>
        <label>3</label>
    </ligand>
</feature>
<evidence type="ECO:0000250" key="1"/>
<evidence type="ECO:0000255" key="2"/>
<evidence type="ECO:0000255" key="3">
    <source>
        <dbReference type="PROSITE-ProRule" id="PRU00465"/>
    </source>
</evidence>
<evidence type="ECO:0000255" key="4">
    <source>
        <dbReference type="PROSITE-ProRule" id="PRU01004"/>
    </source>
</evidence>
<evidence type="ECO:0000255" key="5">
    <source>
        <dbReference type="PROSITE-ProRule" id="PRU01184"/>
    </source>
</evidence>
<evidence type="ECO:0000305" key="6"/>
<organism>
    <name type="scientific">Pseudomonas putida (strain ATCC 47054 / DSM 6125 / CFBP 8728 / NCIMB 11950 / KT2440)</name>
    <dbReference type="NCBI Taxonomy" id="160488"/>
    <lineage>
        <taxon>Bacteria</taxon>
        <taxon>Pseudomonadati</taxon>
        <taxon>Pseudomonadota</taxon>
        <taxon>Gammaproteobacteria</taxon>
        <taxon>Pseudomonadales</taxon>
        <taxon>Pseudomonadaceae</taxon>
        <taxon>Pseudomonas</taxon>
    </lineage>
</organism>
<accession>Q88FH2</accession>
<proteinExistence type="inferred from homology"/>
<comment type="function">
    <text evidence="1">NDH-1 shuttles electrons from NADH, via FMN and iron-sulfur (Fe-S) centers, to quinones in the respiratory chain. The immediate electron acceptor for the enzyme in this species is believed to be ubiquinone. Couples the redox reaction to proton translocation (for every two electrons transferred, four hydrogen ions are translocated across the cytoplasmic membrane), and thus conserves the redox energy in a proton gradient (By similarity).</text>
</comment>
<comment type="catalytic activity">
    <reaction>
        <text>a quinone + NADH + 5 H(+)(in) = a quinol + NAD(+) + 4 H(+)(out)</text>
        <dbReference type="Rhea" id="RHEA:57888"/>
        <dbReference type="ChEBI" id="CHEBI:15378"/>
        <dbReference type="ChEBI" id="CHEBI:24646"/>
        <dbReference type="ChEBI" id="CHEBI:57540"/>
        <dbReference type="ChEBI" id="CHEBI:57945"/>
        <dbReference type="ChEBI" id="CHEBI:132124"/>
    </reaction>
</comment>
<comment type="cofactor">
    <cofactor evidence="1">
        <name>[2Fe-2S] cluster</name>
        <dbReference type="ChEBI" id="CHEBI:190135"/>
    </cofactor>
    <text evidence="1">Binds 1 [2Fe-2S] cluster per subunit.</text>
</comment>
<comment type="cofactor">
    <cofactor evidence="1">
        <name>[4Fe-4S] cluster</name>
        <dbReference type="ChEBI" id="CHEBI:49883"/>
    </cofactor>
    <text evidence="1">Binds 3 [4Fe-4S] clusters per subunit.</text>
</comment>
<comment type="subunit">
    <text>Composed of 13 different subunits. Subunits NuoCD, E, F, and G constitute the peripheral sector of the complex.</text>
</comment>
<comment type="similarity">
    <text evidence="6">Belongs to the complex I 75 kDa subunit family.</text>
</comment>
<name>NUOG_PSEPK</name>
<reference key="1">
    <citation type="journal article" date="2002" name="Environ. Microbiol.">
        <title>Complete genome sequence and comparative analysis of the metabolically versatile Pseudomonas putida KT2440.</title>
        <authorList>
            <person name="Nelson K.E."/>
            <person name="Weinel C."/>
            <person name="Paulsen I.T."/>
            <person name="Dodson R.J."/>
            <person name="Hilbert H."/>
            <person name="Martins dos Santos V.A.P."/>
            <person name="Fouts D.E."/>
            <person name="Gill S.R."/>
            <person name="Pop M."/>
            <person name="Holmes M."/>
            <person name="Brinkac L.M."/>
            <person name="Beanan M.J."/>
            <person name="DeBoy R.T."/>
            <person name="Daugherty S.C."/>
            <person name="Kolonay J.F."/>
            <person name="Madupu R."/>
            <person name="Nelson W.C."/>
            <person name="White O."/>
            <person name="Peterson J.D."/>
            <person name="Khouri H.M."/>
            <person name="Hance I."/>
            <person name="Chris Lee P."/>
            <person name="Holtzapple E.K."/>
            <person name="Scanlan D."/>
            <person name="Tran K."/>
            <person name="Moazzez A."/>
            <person name="Utterback T.R."/>
            <person name="Rizzo M."/>
            <person name="Lee K."/>
            <person name="Kosack D."/>
            <person name="Moestl D."/>
            <person name="Wedler H."/>
            <person name="Lauber J."/>
            <person name="Stjepandic D."/>
            <person name="Hoheisel J."/>
            <person name="Straetz M."/>
            <person name="Heim S."/>
            <person name="Kiewitz C."/>
            <person name="Eisen J.A."/>
            <person name="Timmis K.N."/>
            <person name="Duesterhoeft A."/>
            <person name="Tuemmler B."/>
            <person name="Fraser C.M."/>
        </authorList>
    </citation>
    <scope>NUCLEOTIDE SEQUENCE [LARGE SCALE GENOMIC DNA]</scope>
    <source>
        <strain>ATCC 47054 / DSM 6125 / CFBP 8728 / NCIMB 11950 / KT2440</strain>
    </source>
</reference>
<keyword id="KW-0001">2Fe-2S</keyword>
<keyword id="KW-0004">4Fe-4S</keyword>
<keyword id="KW-0408">Iron</keyword>
<keyword id="KW-0411">Iron-sulfur</keyword>
<keyword id="KW-0479">Metal-binding</keyword>
<keyword id="KW-0520">NAD</keyword>
<keyword id="KW-0874">Quinone</keyword>
<keyword id="KW-1185">Reference proteome</keyword>
<keyword id="KW-1278">Translocase</keyword>
<keyword id="KW-0830">Ubiquinone</keyword>
<dbReference type="EC" id="7.1.1.-"/>
<dbReference type="EMBL" id="AE015451">
    <property type="protein sequence ID" value="AAN69707.1"/>
    <property type="molecule type" value="Genomic_DNA"/>
</dbReference>
<dbReference type="RefSeq" id="NP_746243.1">
    <property type="nucleotide sequence ID" value="NC_002947.4"/>
</dbReference>
<dbReference type="RefSeq" id="WP_010954902.1">
    <property type="nucleotide sequence ID" value="NZ_CP169744.1"/>
</dbReference>
<dbReference type="SMR" id="Q88FH2"/>
<dbReference type="STRING" id="160488.PP_4124"/>
<dbReference type="PaxDb" id="160488-PP_4124"/>
<dbReference type="KEGG" id="ppu:PP_4124"/>
<dbReference type="PATRIC" id="fig|160488.4.peg.4383"/>
<dbReference type="eggNOG" id="COG1034">
    <property type="taxonomic scope" value="Bacteria"/>
</dbReference>
<dbReference type="HOGENOM" id="CLU_000422_11_4_6"/>
<dbReference type="OrthoDB" id="9810782at2"/>
<dbReference type="PhylomeDB" id="Q88FH2"/>
<dbReference type="BioCyc" id="MetaCyc:G1G01-4391-MONOMER"/>
<dbReference type="BioCyc" id="PPUT160488:G1G01-4391-MONOMER"/>
<dbReference type="Proteomes" id="UP000000556">
    <property type="component" value="Chromosome"/>
</dbReference>
<dbReference type="GO" id="GO:0016020">
    <property type="term" value="C:membrane"/>
    <property type="evidence" value="ECO:0007669"/>
    <property type="project" value="InterPro"/>
</dbReference>
<dbReference type="GO" id="GO:0051537">
    <property type="term" value="F:2 iron, 2 sulfur cluster binding"/>
    <property type="evidence" value="ECO:0007669"/>
    <property type="project" value="UniProtKB-KW"/>
</dbReference>
<dbReference type="GO" id="GO:0051539">
    <property type="term" value="F:4 iron, 4 sulfur cluster binding"/>
    <property type="evidence" value="ECO:0007669"/>
    <property type="project" value="UniProtKB-KW"/>
</dbReference>
<dbReference type="GO" id="GO:0046872">
    <property type="term" value="F:metal ion binding"/>
    <property type="evidence" value="ECO:0007669"/>
    <property type="project" value="UniProtKB-KW"/>
</dbReference>
<dbReference type="GO" id="GO:0008137">
    <property type="term" value="F:NADH dehydrogenase (ubiquinone) activity"/>
    <property type="evidence" value="ECO:0007669"/>
    <property type="project" value="InterPro"/>
</dbReference>
<dbReference type="GO" id="GO:0048038">
    <property type="term" value="F:quinone binding"/>
    <property type="evidence" value="ECO:0007669"/>
    <property type="project" value="UniProtKB-KW"/>
</dbReference>
<dbReference type="GO" id="GO:0042773">
    <property type="term" value="P:ATP synthesis coupled electron transport"/>
    <property type="evidence" value="ECO:0007669"/>
    <property type="project" value="InterPro"/>
</dbReference>
<dbReference type="CDD" id="cd00207">
    <property type="entry name" value="fer2"/>
    <property type="match status" value="1"/>
</dbReference>
<dbReference type="CDD" id="cd02788">
    <property type="entry name" value="MopB_CT_NDH-1_NuoG2-N7"/>
    <property type="match status" value="1"/>
</dbReference>
<dbReference type="CDD" id="cd02771">
    <property type="entry name" value="MopB_NDH-1_NuoG2-N7"/>
    <property type="match status" value="1"/>
</dbReference>
<dbReference type="FunFam" id="2.20.25.90:FF:000003">
    <property type="entry name" value="NADH-quinone oxidoreductase"/>
    <property type="match status" value="1"/>
</dbReference>
<dbReference type="FunFam" id="3.10.20.740:FF:000002">
    <property type="entry name" value="NADH-quinone oxidoreductase"/>
    <property type="match status" value="1"/>
</dbReference>
<dbReference type="FunFam" id="3.40.50.740:FF:000006">
    <property type="entry name" value="NADH-quinone oxidoreductase"/>
    <property type="match status" value="1"/>
</dbReference>
<dbReference type="Gene3D" id="3.10.20.740">
    <property type="match status" value="1"/>
</dbReference>
<dbReference type="Gene3D" id="3.30.200.210">
    <property type="match status" value="1"/>
</dbReference>
<dbReference type="Gene3D" id="3.40.50.740">
    <property type="match status" value="1"/>
</dbReference>
<dbReference type="InterPro" id="IPR036010">
    <property type="entry name" value="2Fe-2S_ferredoxin-like_sf"/>
</dbReference>
<dbReference type="InterPro" id="IPR001041">
    <property type="entry name" value="2Fe-2S_ferredoxin-type"/>
</dbReference>
<dbReference type="InterPro" id="IPR006656">
    <property type="entry name" value="Mopterin_OxRdtase"/>
</dbReference>
<dbReference type="InterPro" id="IPR006963">
    <property type="entry name" value="Mopterin_OxRdtase_4Fe-4S_dom"/>
</dbReference>
<dbReference type="InterPro" id="IPR000283">
    <property type="entry name" value="NADH_UbQ_OxRdtase_75kDa_su_CS"/>
</dbReference>
<dbReference type="InterPro" id="IPR054351">
    <property type="entry name" value="NADH_UbQ_OxRdtase_ferredoxin"/>
</dbReference>
<dbReference type="InterPro" id="IPR010228">
    <property type="entry name" value="NADH_UbQ_OxRdtase_Gsu"/>
</dbReference>
<dbReference type="InterPro" id="IPR019574">
    <property type="entry name" value="NADH_UbQ_OxRdtase_Gsu_4Fe4S-bd"/>
</dbReference>
<dbReference type="InterPro" id="IPR050123">
    <property type="entry name" value="Prok_molybdopt-oxidoreductase"/>
</dbReference>
<dbReference type="NCBIfam" id="TIGR01973">
    <property type="entry name" value="NuoG"/>
    <property type="match status" value="1"/>
</dbReference>
<dbReference type="PANTHER" id="PTHR43105:SF10">
    <property type="entry name" value="NADH-QUINONE OXIDOREDUCTASE SUBUNIT G"/>
    <property type="match status" value="1"/>
</dbReference>
<dbReference type="PANTHER" id="PTHR43105">
    <property type="entry name" value="RESPIRATORY NITRATE REDUCTASE"/>
    <property type="match status" value="1"/>
</dbReference>
<dbReference type="Pfam" id="PF13510">
    <property type="entry name" value="Fer2_4"/>
    <property type="match status" value="1"/>
</dbReference>
<dbReference type="Pfam" id="PF22117">
    <property type="entry name" value="Fer4_Nqo3"/>
    <property type="match status" value="1"/>
</dbReference>
<dbReference type="Pfam" id="PF04879">
    <property type="entry name" value="Molybdop_Fe4S4"/>
    <property type="match status" value="1"/>
</dbReference>
<dbReference type="Pfam" id="PF00384">
    <property type="entry name" value="Molybdopterin"/>
    <property type="match status" value="1"/>
</dbReference>
<dbReference type="Pfam" id="PF10588">
    <property type="entry name" value="NADH-G_4Fe-4S_3"/>
    <property type="match status" value="1"/>
</dbReference>
<dbReference type="SMART" id="SM00926">
    <property type="entry name" value="Molybdop_Fe4S4"/>
    <property type="match status" value="1"/>
</dbReference>
<dbReference type="SMART" id="SM00929">
    <property type="entry name" value="NADH-G_4Fe-4S_3"/>
    <property type="match status" value="1"/>
</dbReference>
<dbReference type="SUPFAM" id="SSF54292">
    <property type="entry name" value="2Fe-2S ferredoxin-like"/>
    <property type="match status" value="1"/>
</dbReference>
<dbReference type="SUPFAM" id="SSF54862">
    <property type="entry name" value="4Fe-4S ferredoxins"/>
    <property type="match status" value="1"/>
</dbReference>
<dbReference type="SUPFAM" id="SSF53706">
    <property type="entry name" value="Formate dehydrogenase/DMSO reductase, domains 1-3"/>
    <property type="match status" value="1"/>
</dbReference>
<dbReference type="PROSITE" id="PS51085">
    <property type="entry name" value="2FE2S_FER_2"/>
    <property type="match status" value="1"/>
</dbReference>
<dbReference type="PROSITE" id="PS51839">
    <property type="entry name" value="4FE4S_HC3"/>
    <property type="match status" value="1"/>
</dbReference>
<dbReference type="PROSITE" id="PS51669">
    <property type="entry name" value="4FE4S_MOW_BIS_MGD"/>
    <property type="match status" value="1"/>
</dbReference>
<dbReference type="PROSITE" id="PS00641">
    <property type="entry name" value="COMPLEX1_75K_1"/>
    <property type="match status" value="1"/>
</dbReference>
<dbReference type="PROSITE" id="PS00642">
    <property type="entry name" value="COMPLEX1_75K_2"/>
    <property type="match status" value="1"/>
</dbReference>
<dbReference type="PROSITE" id="PS00643">
    <property type="entry name" value="COMPLEX1_75K_3"/>
    <property type="match status" value="1"/>
</dbReference>
<protein>
    <recommendedName>
        <fullName>NADH-quinone oxidoreductase subunit G</fullName>
        <ecNumber>7.1.1.-</ecNumber>
    </recommendedName>
    <alternativeName>
        <fullName>NADH dehydrogenase I subunit G</fullName>
    </alternativeName>
    <alternativeName>
        <fullName>NDH-1 subunit G</fullName>
    </alternativeName>
</protein>